<sequence length="356" mass="40562">MAISDLLNRRVRALPDEDEEVYSDAAESEEPSDDGQSDSDDGSHGSLPDTDESQDELHDDQQSDDDDDNDSNDDEDEGDSEDDDNPDDDVKASLSNISFGALAKAQASLGPKSKRKSKSTDEETTASPLDDIRARIREAREQKRQLSSKTGDEKKPTRSSKHAPMVQSSKRAVTRKRTIIEPPAVPKARDPRFDPTVLSNSSRHNPDAANKAYAFLDDYRKSELQELKEKYAKTKNAAEKEELKRAIRSTSDRLRAIENQKREREILAEHKKKEKQLIREGKKSNPYYLKKSDLKKQVLLKKYENMNSKERMKALERRRKKMASKERKEMPMERRGLENDAAPAHDGPGRKRRRVA</sequence>
<gene>
    <name type="primary">rrp36</name>
    <name type="ORF">ATEG_06990</name>
</gene>
<organism>
    <name type="scientific">Aspergillus terreus (strain NIH 2624 / FGSC A1156)</name>
    <dbReference type="NCBI Taxonomy" id="341663"/>
    <lineage>
        <taxon>Eukaryota</taxon>
        <taxon>Fungi</taxon>
        <taxon>Dikarya</taxon>
        <taxon>Ascomycota</taxon>
        <taxon>Pezizomycotina</taxon>
        <taxon>Eurotiomycetes</taxon>
        <taxon>Eurotiomycetidae</taxon>
        <taxon>Eurotiales</taxon>
        <taxon>Aspergillaceae</taxon>
        <taxon>Aspergillus</taxon>
        <taxon>Aspergillus subgen. Circumdati</taxon>
    </lineage>
</organism>
<reference key="1">
    <citation type="submission" date="2005-09" db="EMBL/GenBank/DDBJ databases">
        <title>Annotation of the Aspergillus terreus NIH2624 genome.</title>
        <authorList>
            <person name="Birren B.W."/>
            <person name="Lander E.S."/>
            <person name="Galagan J.E."/>
            <person name="Nusbaum C."/>
            <person name="Devon K."/>
            <person name="Henn M."/>
            <person name="Ma L.-J."/>
            <person name="Jaffe D.B."/>
            <person name="Butler J."/>
            <person name="Alvarez P."/>
            <person name="Gnerre S."/>
            <person name="Grabherr M."/>
            <person name="Kleber M."/>
            <person name="Mauceli E.W."/>
            <person name="Brockman W."/>
            <person name="Rounsley S."/>
            <person name="Young S.K."/>
            <person name="LaButti K."/>
            <person name="Pushparaj V."/>
            <person name="DeCaprio D."/>
            <person name="Crawford M."/>
            <person name="Koehrsen M."/>
            <person name="Engels R."/>
            <person name="Montgomery P."/>
            <person name="Pearson M."/>
            <person name="Howarth C."/>
            <person name="Larson L."/>
            <person name="Luoma S."/>
            <person name="White J."/>
            <person name="Alvarado L."/>
            <person name="Kodira C.D."/>
            <person name="Zeng Q."/>
            <person name="Oleary S."/>
            <person name="Yandava C."/>
            <person name="Denning D.W."/>
            <person name="Nierman W.C."/>
            <person name="Milne T."/>
            <person name="Madden K."/>
        </authorList>
    </citation>
    <scope>NUCLEOTIDE SEQUENCE [LARGE SCALE GENOMIC DNA]</scope>
    <source>
        <strain>NIH 2624 / FGSC A1156</strain>
    </source>
</reference>
<evidence type="ECO:0000250" key="1"/>
<evidence type="ECO:0000255" key="2"/>
<evidence type="ECO:0000256" key="3">
    <source>
        <dbReference type="SAM" id="MobiDB-lite"/>
    </source>
</evidence>
<evidence type="ECO:0000305" key="4"/>
<feature type="chain" id="PRO_0000397620" description="rRNA biogenesis protein rrp36">
    <location>
        <begin position="1"/>
        <end position="356"/>
    </location>
</feature>
<feature type="region of interest" description="Disordered" evidence="3">
    <location>
        <begin position="1"/>
        <end position="209"/>
    </location>
</feature>
<feature type="region of interest" description="Disordered" evidence="3">
    <location>
        <begin position="302"/>
        <end position="356"/>
    </location>
</feature>
<feature type="coiled-coil region" evidence="2">
    <location>
        <begin position="220"/>
        <end position="330"/>
    </location>
</feature>
<feature type="compositionally biased region" description="Acidic residues" evidence="3">
    <location>
        <begin position="16"/>
        <end position="40"/>
    </location>
</feature>
<feature type="compositionally biased region" description="Acidic residues" evidence="3">
    <location>
        <begin position="62"/>
        <end position="87"/>
    </location>
</feature>
<feature type="compositionally biased region" description="Basic and acidic residues" evidence="3">
    <location>
        <begin position="130"/>
        <end position="156"/>
    </location>
</feature>
<feature type="compositionally biased region" description="Basic and acidic residues" evidence="3">
    <location>
        <begin position="302"/>
        <end position="315"/>
    </location>
</feature>
<feature type="compositionally biased region" description="Basic and acidic residues" evidence="3">
    <location>
        <begin position="323"/>
        <end position="338"/>
    </location>
</feature>
<protein>
    <recommendedName>
        <fullName>rRNA biogenesis protein rrp36</fullName>
    </recommendedName>
    <alternativeName>
        <fullName>Ribosomal RNA-processing protein 36</fullName>
    </alternativeName>
</protein>
<name>RRP36_ASPTN</name>
<comment type="function">
    <text evidence="1">Component of the 90S pre-ribosome involved in the maturation of rRNAs. Required for early cleavages of the pre-RNAs in the 40S ribosomal subunit maturation pathway (By similarity).</text>
</comment>
<comment type="subunit">
    <text evidence="1">Associates with 90S and pre-40S pre-ribosomal particles.</text>
</comment>
<comment type="subcellular location">
    <subcellularLocation>
        <location evidence="1">Nucleus</location>
        <location evidence="1">Nucleolus</location>
    </subcellularLocation>
</comment>
<comment type="similarity">
    <text evidence="4">Belongs to the RRP36 family.</text>
</comment>
<dbReference type="EMBL" id="CH476603">
    <property type="protein sequence ID" value="EAU32374.1"/>
    <property type="molecule type" value="Genomic_DNA"/>
</dbReference>
<dbReference type="RefSeq" id="XP_001209676.1">
    <property type="nucleotide sequence ID" value="XM_001209676.1"/>
</dbReference>
<dbReference type="SMR" id="Q0CH52"/>
<dbReference type="STRING" id="341663.Q0CH52"/>
<dbReference type="EnsemblFungi" id="EAU32374">
    <property type="protein sequence ID" value="EAU32374"/>
    <property type="gene ID" value="ATEG_06990"/>
</dbReference>
<dbReference type="GeneID" id="4319194"/>
<dbReference type="VEuPathDB" id="FungiDB:ATEG_06990"/>
<dbReference type="eggNOG" id="KOG3190">
    <property type="taxonomic scope" value="Eukaryota"/>
</dbReference>
<dbReference type="HOGENOM" id="CLU_048802_0_0_1"/>
<dbReference type="OMA" id="ERKEMPW"/>
<dbReference type="OrthoDB" id="448446at2759"/>
<dbReference type="Proteomes" id="UP000007963">
    <property type="component" value="Unassembled WGS sequence"/>
</dbReference>
<dbReference type="GO" id="GO:0030686">
    <property type="term" value="C:90S preribosome"/>
    <property type="evidence" value="ECO:0007669"/>
    <property type="project" value="TreeGrafter"/>
</dbReference>
<dbReference type="GO" id="GO:0005730">
    <property type="term" value="C:nucleolus"/>
    <property type="evidence" value="ECO:0007669"/>
    <property type="project" value="UniProtKB-SubCell"/>
</dbReference>
<dbReference type="GO" id="GO:0000462">
    <property type="term" value="P:maturation of SSU-rRNA from tricistronic rRNA transcript (SSU-rRNA, 5.8S rRNA, LSU-rRNA)"/>
    <property type="evidence" value="ECO:0007669"/>
    <property type="project" value="TreeGrafter"/>
</dbReference>
<dbReference type="InterPro" id="IPR009292">
    <property type="entry name" value="RRP36"/>
</dbReference>
<dbReference type="PANTHER" id="PTHR21738">
    <property type="entry name" value="RIBOSOMAL RNA PROCESSING PROTEIN 36 HOMOLOG"/>
    <property type="match status" value="1"/>
</dbReference>
<dbReference type="PANTHER" id="PTHR21738:SF0">
    <property type="entry name" value="RIBOSOMAL RNA PROCESSING PROTEIN 36 HOMOLOG"/>
    <property type="match status" value="1"/>
</dbReference>
<dbReference type="Pfam" id="PF06102">
    <property type="entry name" value="RRP36"/>
    <property type="match status" value="1"/>
</dbReference>
<keyword id="KW-0175">Coiled coil</keyword>
<keyword id="KW-0539">Nucleus</keyword>
<keyword id="KW-1185">Reference proteome</keyword>
<keyword id="KW-0687">Ribonucleoprotein</keyword>
<keyword id="KW-0690">Ribosome biogenesis</keyword>
<keyword id="KW-0698">rRNA processing</keyword>
<accession>Q0CH52</accession>
<proteinExistence type="inferred from homology"/>